<gene>
    <name type="primary">GAD1</name>
</gene>
<name>DCE1_BOVIN</name>
<proteinExistence type="evidence at transcript level"/>
<comment type="function">
    <text evidence="2">Catalyzes the synthesis of the inhibitory neurotransmitter gamma-aminobutyric acid (GABA) with pyridoxal 5'-phosphate as cofactor.</text>
</comment>
<comment type="catalytic activity">
    <reaction evidence="2">
        <text>L-glutamate + H(+) = 4-aminobutanoate + CO2</text>
        <dbReference type="Rhea" id="RHEA:17785"/>
        <dbReference type="ChEBI" id="CHEBI:15378"/>
        <dbReference type="ChEBI" id="CHEBI:16526"/>
        <dbReference type="ChEBI" id="CHEBI:29985"/>
        <dbReference type="ChEBI" id="CHEBI:59888"/>
        <dbReference type="EC" id="4.1.1.15"/>
    </reaction>
    <physiologicalReaction direction="left-to-right" evidence="2">
        <dbReference type="Rhea" id="RHEA:17786"/>
    </physiologicalReaction>
</comment>
<comment type="cofactor">
    <cofactor evidence="2">
        <name>pyridoxal 5'-phosphate</name>
        <dbReference type="ChEBI" id="CHEBI:597326"/>
    </cofactor>
</comment>
<comment type="subunit">
    <text evidence="2">Homodimer.</text>
</comment>
<comment type="similarity">
    <text evidence="4">Belongs to the group II decarboxylase family.</text>
</comment>
<organism>
    <name type="scientific">Bos taurus</name>
    <name type="common">Bovine</name>
    <dbReference type="NCBI Taxonomy" id="9913"/>
    <lineage>
        <taxon>Eukaryota</taxon>
        <taxon>Metazoa</taxon>
        <taxon>Chordata</taxon>
        <taxon>Craniata</taxon>
        <taxon>Vertebrata</taxon>
        <taxon>Euteleostomi</taxon>
        <taxon>Mammalia</taxon>
        <taxon>Eutheria</taxon>
        <taxon>Laurasiatheria</taxon>
        <taxon>Artiodactyla</taxon>
        <taxon>Ruminantia</taxon>
        <taxon>Pecora</taxon>
        <taxon>Bovidae</taxon>
        <taxon>Bovinae</taxon>
        <taxon>Bos</taxon>
    </lineage>
</organism>
<protein>
    <recommendedName>
        <fullName>Glutamate decarboxylase 1</fullName>
        <ecNumber evidence="2">4.1.1.15</ecNumber>
    </recommendedName>
</protein>
<reference key="1">
    <citation type="submission" date="2006-08" db="EMBL/GenBank/DDBJ databases">
        <authorList>
            <consortium name="NIH - Mammalian Gene Collection (MGC) project"/>
        </authorList>
    </citation>
    <scope>NUCLEOTIDE SEQUENCE [LARGE SCALE MRNA]</scope>
    <source>
        <strain>Hereford</strain>
        <tissue>Fetal cerebellum</tissue>
    </source>
</reference>
<accession>Q0VCA1</accession>
<evidence type="ECO:0000250" key="1">
    <source>
        <dbReference type="UniProtKB" id="P48318"/>
    </source>
</evidence>
<evidence type="ECO:0000250" key="2">
    <source>
        <dbReference type="UniProtKB" id="Q99259"/>
    </source>
</evidence>
<evidence type="ECO:0000256" key="3">
    <source>
        <dbReference type="SAM" id="MobiDB-lite"/>
    </source>
</evidence>
<evidence type="ECO:0000305" key="4"/>
<sequence>MASSTPSSSATSSNAGADPNTTNLRPTTYDTWCGVAHGCTRKLGLKICGFLQRTNSLEEKSRLVSAFKERQSSKNLLSCENSDKDGRFRRTETDFSNLFARDLLPAKNGEEQTVQFLLEVVDILLNYVRKTFDRSTKVLDFHHPHQLLEGMEGFNLELSDHPESLEQILVDCRDTLKYGVRTGHPRFFNQLSTGLDIIGLAGEWLTSTANTNMFTYEIAPVFVLMEQITLKKMREIVGWSSKDGDGIFSPGGAISNMYSIMAARFKYFPEVKTKGMAAVPKLVLFTSEHSHYSIKKAGAALGFGTDNVILIKCNERGKIIPADLETKILEAKQKGYVPLYVNATAGTTVYGAFDPIQEIADICEKYNLWLHVDAAWGGGLLMSQKHRHKLSGIERANSVTWNPHKMMGVLLQCSAILVKEKGILQGCNQMCAGYLFQPDKQYDVSYDTGDKAIQCGRHVDIFKFWLMWKAKGTVGFENQINKCLELAEYLYAKIKNREEFEMVFDGEPEHTNVCFWYIPQSLRGVPDSPERREKLHRVAPKIKALMMESGTTMVGYQPQGDKANFFRMVISNPAATQSDIDFLIEEIERLGQDL</sequence>
<feature type="chain" id="PRO_0000289582" description="Glutamate decarboxylase 1">
    <location>
        <begin position="1"/>
        <end position="594"/>
    </location>
</feature>
<feature type="region of interest" description="Disordered" evidence="3">
    <location>
        <begin position="1"/>
        <end position="23"/>
    </location>
</feature>
<feature type="compositionally biased region" description="Low complexity" evidence="3">
    <location>
        <begin position="1"/>
        <end position="13"/>
    </location>
</feature>
<feature type="binding site" evidence="2">
    <location>
        <begin position="190"/>
        <end position="192"/>
    </location>
    <ligand>
        <name>4-aminobutanoate</name>
        <dbReference type="ChEBI" id="CHEBI:59888"/>
    </ligand>
</feature>
<feature type="binding site" evidence="2">
    <location>
        <position position="567"/>
    </location>
    <ligand>
        <name>4-aminobutanoate</name>
        <dbReference type="ChEBI" id="CHEBI:59888"/>
    </ligand>
</feature>
<feature type="modified residue" description="Phosphoserine" evidence="1">
    <location>
        <position position="78"/>
    </location>
</feature>
<feature type="modified residue" description="N6-(pyridoxal phosphate)lysine" evidence="2">
    <location>
        <position position="405"/>
    </location>
</feature>
<keyword id="KW-0210">Decarboxylase</keyword>
<keyword id="KW-0456">Lyase</keyword>
<keyword id="KW-0530">Neurotransmitter biosynthesis</keyword>
<keyword id="KW-0597">Phosphoprotein</keyword>
<keyword id="KW-0663">Pyridoxal phosphate</keyword>
<keyword id="KW-1185">Reference proteome</keyword>
<dbReference type="EC" id="4.1.1.15" evidence="2"/>
<dbReference type="EMBL" id="BC120278">
    <property type="protein sequence ID" value="AAI20279.1"/>
    <property type="molecule type" value="mRNA"/>
</dbReference>
<dbReference type="RefSeq" id="NP_001069224.1">
    <property type="nucleotide sequence ID" value="NM_001075756.2"/>
</dbReference>
<dbReference type="RefSeq" id="XP_005202387.1">
    <property type="nucleotide sequence ID" value="XM_005202330.5"/>
</dbReference>
<dbReference type="RefSeq" id="XP_015330341.1">
    <property type="nucleotide sequence ID" value="XM_015474855.1"/>
</dbReference>
<dbReference type="SMR" id="Q0VCA1"/>
<dbReference type="FunCoup" id="Q0VCA1">
    <property type="interactions" value="1223"/>
</dbReference>
<dbReference type="STRING" id="9913.ENSBTAP00000009547"/>
<dbReference type="PaxDb" id="9913-ENSBTAP00000009547"/>
<dbReference type="Ensembl" id="ENSBTAT00000009547.6">
    <property type="protein sequence ID" value="ENSBTAP00000009547.5"/>
    <property type="gene ID" value="ENSBTAG00000007258.7"/>
</dbReference>
<dbReference type="GeneID" id="517552"/>
<dbReference type="KEGG" id="bta:517552"/>
<dbReference type="CTD" id="2571"/>
<dbReference type="VEuPathDB" id="HostDB:ENSBTAG00000007258"/>
<dbReference type="VGNC" id="VGNC:29204">
    <property type="gene designation" value="GAD1"/>
</dbReference>
<dbReference type="eggNOG" id="KOG0629">
    <property type="taxonomic scope" value="Eukaryota"/>
</dbReference>
<dbReference type="GeneTree" id="ENSGT00940000155526"/>
<dbReference type="HOGENOM" id="CLU_011856_0_0_1"/>
<dbReference type="InParanoid" id="Q0VCA1"/>
<dbReference type="OMA" id="RHATYHA"/>
<dbReference type="OrthoDB" id="392571at2759"/>
<dbReference type="TreeFam" id="TF314688"/>
<dbReference type="Reactome" id="R-BTA-888568">
    <property type="pathway name" value="GABA synthesis"/>
</dbReference>
<dbReference type="Reactome" id="R-BTA-888590">
    <property type="pathway name" value="GABA synthesis, release, reuptake and degradation"/>
</dbReference>
<dbReference type="Proteomes" id="UP000009136">
    <property type="component" value="Chromosome 2"/>
</dbReference>
<dbReference type="Bgee" id="ENSBTAG00000007258">
    <property type="expression patterns" value="Expressed in floor plate of diencephalon and 23 other cell types or tissues"/>
</dbReference>
<dbReference type="GO" id="GO:0005737">
    <property type="term" value="C:cytoplasm"/>
    <property type="evidence" value="ECO:0000318"/>
    <property type="project" value="GO_Central"/>
</dbReference>
<dbReference type="GO" id="GO:0048786">
    <property type="term" value="C:presynaptic active zone"/>
    <property type="evidence" value="ECO:0000318"/>
    <property type="project" value="GO_Central"/>
</dbReference>
<dbReference type="GO" id="GO:0004351">
    <property type="term" value="F:glutamate decarboxylase activity"/>
    <property type="evidence" value="ECO:0000250"/>
    <property type="project" value="UniProtKB"/>
</dbReference>
<dbReference type="GO" id="GO:0042802">
    <property type="term" value="F:identical protein binding"/>
    <property type="evidence" value="ECO:0000250"/>
    <property type="project" value="UniProtKB"/>
</dbReference>
<dbReference type="GO" id="GO:0030170">
    <property type="term" value="F:pyridoxal phosphate binding"/>
    <property type="evidence" value="ECO:0007669"/>
    <property type="project" value="InterPro"/>
</dbReference>
<dbReference type="GO" id="GO:0009449">
    <property type="term" value="P:gamma-aminobutyric acid biosynthetic process"/>
    <property type="evidence" value="ECO:0000250"/>
    <property type="project" value="UniProtKB"/>
</dbReference>
<dbReference type="GO" id="GO:0006538">
    <property type="term" value="P:glutamate catabolic process"/>
    <property type="evidence" value="ECO:0000250"/>
    <property type="project" value="UniProtKB"/>
</dbReference>
<dbReference type="CDD" id="cd06450">
    <property type="entry name" value="DOPA_deC_like"/>
    <property type="match status" value="1"/>
</dbReference>
<dbReference type="FunFam" id="3.90.1150.170:FF:000003">
    <property type="entry name" value="Glutamate decarboxylase 1"/>
    <property type="match status" value="1"/>
</dbReference>
<dbReference type="FunFam" id="3.40.640.10:FF:000016">
    <property type="entry name" value="Glutamate decarboxylase like 1"/>
    <property type="match status" value="1"/>
</dbReference>
<dbReference type="Gene3D" id="3.90.1150.170">
    <property type="match status" value="1"/>
</dbReference>
<dbReference type="Gene3D" id="3.40.640.10">
    <property type="entry name" value="Type I PLP-dependent aspartate aminotransferase-like (Major domain)"/>
    <property type="match status" value="1"/>
</dbReference>
<dbReference type="InterPro" id="IPR002129">
    <property type="entry name" value="PyrdxlP-dep_de-COase"/>
</dbReference>
<dbReference type="InterPro" id="IPR015424">
    <property type="entry name" value="PyrdxlP-dep_Trfase"/>
</dbReference>
<dbReference type="InterPro" id="IPR015421">
    <property type="entry name" value="PyrdxlP-dep_Trfase_major"/>
</dbReference>
<dbReference type="InterPro" id="IPR021115">
    <property type="entry name" value="Pyridoxal-P_BS"/>
</dbReference>
<dbReference type="PANTHER" id="PTHR45677:SF5">
    <property type="entry name" value="GLUTAMATE DECARBOXYLASE 1"/>
    <property type="match status" value="1"/>
</dbReference>
<dbReference type="PANTHER" id="PTHR45677">
    <property type="entry name" value="GLUTAMATE DECARBOXYLASE-RELATED"/>
    <property type="match status" value="1"/>
</dbReference>
<dbReference type="Pfam" id="PF00282">
    <property type="entry name" value="Pyridoxal_deC"/>
    <property type="match status" value="1"/>
</dbReference>
<dbReference type="SUPFAM" id="SSF53383">
    <property type="entry name" value="PLP-dependent transferases"/>
    <property type="match status" value="1"/>
</dbReference>
<dbReference type="PROSITE" id="PS00392">
    <property type="entry name" value="DDC_GAD_HDC_YDC"/>
    <property type="match status" value="1"/>
</dbReference>